<proteinExistence type="inferred from homology"/>
<accession>Q54GA9</accession>
<evidence type="ECO:0000250" key="1"/>
<evidence type="ECO:0000255" key="2"/>
<evidence type="ECO:0000305" key="3"/>
<dbReference type="EC" id="2.5.1.18"/>
<dbReference type="EMBL" id="AAFI02000162">
    <property type="protein sequence ID" value="EAL62272.1"/>
    <property type="molecule type" value="Genomic_DNA"/>
</dbReference>
<dbReference type="RefSeq" id="XP_635774.1">
    <property type="nucleotide sequence ID" value="XM_630682.1"/>
</dbReference>
<dbReference type="SMR" id="Q54GA9"/>
<dbReference type="FunCoup" id="Q54GA9">
    <property type="interactions" value="24"/>
</dbReference>
<dbReference type="STRING" id="44689.Q54GA9"/>
<dbReference type="PaxDb" id="44689-DDB0231516"/>
<dbReference type="EnsemblProtists" id="EAL62272">
    <property type="protein sequence ID" value="EAL62272"/>
    <property type="gene ID" value="DDB_G0290291"/>
</dbReference>
<dbReference type="GeneID" id="8627578"/>
<dbReference type="KEGG" id="ddi:DDB_G0290291"/>
<dbReference type="dictyBase" id="DDB_G0290291"/>
<dbReference type="VEuPathDB" id="AmoebaDB:DDB_G0290291"/>
<dbReference type="eggNOG" id="ENOG502RHV2">
    <property type="taxonomic scope" value="Eukaryota"/>
</dbReference>
<dbReference type="HOGENOM" id="CLU_110291_3_1_1"/>
<dbReference type="InParanoid" id="Q54GA9"/>
<dbReference type="OMA" id="CCKKEKE"/>
<dbReference type="PhylomeDB" id="Q54GA9"/>
<dbReference type="Reactome" id="R-DDI-156590">
    <property type="pathway name" value="Glutathione conjugation"/>
</dbReference>
<dbReference type="Reactome" id="R-DDI-2142688">
    <property type="pathway name" value="Synthesis of 5-eicosatetraenoic acids"/>
</dbReference>
<dbReference type="Reactome" id="R-DDI-2142691">
    <property type="pathway name" value="Synthesis of Leukotrienes (LT) and Eoxins (EX)"/>
</dbReference>
<dbReference type="Reactome" id="R-DDI-2142700">
    <property type="pathway name" value="Biosynthesis of Lipoxins (LX)"/>
</dbReference>
<dbReference type="Reactome" id="R-DDI-5423646">
    <property type="pathway name" value="Aflatoxin activation and detoxification"/>
</dbReference>
<dbReference type="Reactome" id="R-DDI-9026762">
    <property type="pathway name" value="Biosynthesis of maresin conjugates in tissue regeneration (MCTR)"/>
</dbReference>
<dbReference type="Reactome" id="R-DDI-9026766">
    <property type="pathway name" value="Biosynthesis of protectin and resolvin conjugates in tissue regeneration (PCTR and RCTR)"/>
</dbReference>
<dbReference type="PRO" id="PR:Q54GA9"/>
<dbReference type="Proteomes" id="UP000002195">
    <property type="component" value="Chromosome 5"/>
</dbReference>
<dbReference type="GO" id="GO:0005783">
    <property type="term" value="C:endoplasmic reticulum"/>
    <property type="evidence" value="ECO:0000318"/>
    <property type="project" value="GO_Central"/>
</dbReference>
<dbReference type="GO" id="GO:0016020">
    <property type="term" value="C:membrane"/>
    <property type="evidence" value="ECO:0007669"/>
    <property type="project" value="UniProtKB-SubCell"/>
</dbReference>
<dbReference type="GO" id="GO:0005635">
    <property type="term" value="C:nuclear envelope"/>
    <property type="evidence" value="ECO:0000318"/>
    <property type="project" value="GO_Central"/>
</dbReference>
<dbReference type="GO" id="GO:0004602">
    <property type="term" value="F:glutathione peroxidase activity"/>
    <property type="evidence" value="ECO:0000318"/>
    <property type="project" value="GO_Central"/>
</dbReference>
<dbReference type="GO" id="GO:0004364">
    <property type="term" value="F:glutathione transferase activity"/>
    <property type="evidence" value="ECO:0000318"/>
    <property type="project" value="GO_Central"/>
</dbReference>
<dbReference type="GO" id="GO:0006691">
    <property type="term" value="P:leukotriene metabolic process"/>
    <property type="evidence" value="ECO:0007669"/>
    <property type="project" value="UniProtKB-ARBA"/>
</dbReference>
<dbReference type="FunFam" id="1.20.120.550:FF:000014">
    <property type="entry name" value="Probable microsomal glutathione S-transferase"/>
    <property type="match status" value="1"/>
</dbReference>
<dbReference type="Gene3D" id="1.20.120.550">
    <property type="entry name" value="Membrane associated eicosanoid/glutathione metabolism-like domain"/>
    <property type="match status" value="1"/>
</dbReference>
<dbReference type="InterPro" id="IPR050997">
    <property type="entry name" value="MAPEG"/>
</dbReference>
<dbReference type="InterPro" id="IPR023352">
    <property type="entry name" value="MAPEG-like_dom_sf"/>
</dbReference>
<dbReference type="InterPro" id="IPR001129">
    <property type="entry name" value="Membr-assoc_MAPEG"/>
</dbReference>
<dbReference type="PANTHER" id="PTHR10250">
    <property type="entry name" value="MICROSOMAL GLUTATHIONE S-TRANSFERASE"/>
    <property type="match status" value="1"/>
</dbReference>
<dbReference type="PANTHER" id="PTHR10250:SF15">
    <property type="entry name" value="MICROSOMAL GLUTATHIONE S-TRANSFERASE-RELATED"/>
    <property type="match status" value="1"/>
</dbReference>
<dbReference type="Pfam" id="PF01124">
    <property type="entry name" value="MAPEG"/>
    <property type="match status" value="1"/>
</dbReference>
<dbReference type="SUPFAM" id="SSF161084">
    <property type="entry name" value="MAPEG domain-like"/>
    <property type="match status" value="1"/>
</dbReference>
<protein>
    <recommendedName>
        <fullName>Probable microsomal glutathione S-transferase</fullName>
        <ecNumber>2.5.1.18</ecNumber>
    </recommendedName>
</protein>
<keyword id="KW-0472">Membrane</keyword>
<keyword id="KW-1185">Reference proteome</keyword>
<keyword id="KW-0808">Transferase</keyword>
<keyword id="KW-0812">Transmembrane</keyword>
<keyword id="KW-1133">Transmembrane helix</keyword>
<gene>
    <name type="primary">mgst</name>
    <name type="ORF">DDB_G0290291</name>
</gene>
<comment type="function">
    <text evidence="1">May perform the conjugation of reduced glutathione to electrophiles.</text>
</comment>
<comment type="catalytic activity">
    <reaction>
        <text>RX + glutathione = an S-substituted glutathione + a halide anion + H(+)</text>
        <dbReference type="Rhea" id="RHEA:16437"/>
        <dbReference type="ChEBI" id="CHEBI:15378"/>
        <dbReference type="ChEBI" id="CHEBI:16042"/>
        <dbReference type="ChEBI" id="CHEBI:17792"/>
        <dbReference type="ChEBI" id="CHEBI:57925"/>
        <dbReference type="ChEBI" id="CHEBI:90779"/>
        <dbReference type="EC" id="2.5.1.18"/>
    </reaction>
</comment>
<comment type="subcellular location">
    <subcellularLocation>
        <location evidence="3">Membrane</location>
        <topology evidence="3">Multi-pass membrane protein</topology>
    </subcellularLocation>
</comment>
<comment type="similarity">
    <text evidence="3">Belongs to the MAPEG family.</text>
</comment>
<reference key="1">
    <citation type="journal article" date="2005" name="Nature">
        <title>The genome of the social amoeba Dictyostelium discoideum.</title>
        <authorList>
            <person name="Eichinger L."/>
            <person name="Pachebat J.A."/>
            <person name="Gloeckner G."/>
            <person name="Rajandream M.A."/>
            <person name="Sucgang R."/>
            <person name="Berriman M."/>
            <person name="Song J."/>
            <person name="Olsen R."/>
            <person name="Szafranski K."/>
            <person name="Xu Q."/>
            <person name="Tunggal B."/>
            <person name="Kummerfeld S."/>
            <person name="Madera M."/>
            <person name="Konfortov B.A."/>
            <person name="Rivero F."/>
            <person name="Bankier A.T."/>
            <person name="Lehmann R."/>
            <person name="Hamlin N."/>
            <person name="Davies R."/>
            <person name="Gaudet P."/>
            <person name="Fey P."/>
            <person name="Pilcher K."/>
            <person name="Chen G."/>
            <person name="Saunders D."/>
            <person name="Sodergren E.J."/>
            <person name="Davis P."/>
            <person name="Kerhornou A."/>
            <person name="Nie X."/>
            <person name="Hall N."/>
            <person name="Anjard C."/>
            <person name="Hemphill L."/>
            <person name="Bason N."/>
            <person name="Farbrother P."/>
            <person name="Desany B."/>
            <person name="Just E."/>
            <person name="Morio T."/>
            <person name="Rost R."/>
            <person name="Churcher C.M."/>
            <person name="Cooper J."/>
            <person name="Haydock S."/>
            <person name="van Driessche N."/>
            <person name="Cronin A."/>
            <person name="Goodhead I."/>
            <person name="Muzny D.M."/>
            <person name="Mourier T."/>
            <person name="Pain A."/>
            <person name="Lu M."/>
            <person name="Harper D."/>
            <person name="Lindsay R."/>
            <person name="Hauser H."/>
            <person name="James K.D."/>
            <person name="Quiles M."/>
            <person name="Madan Babu M."/>
            <person name="Saito T."/>
            <person name="Buchrieser C."/>
            <person name="Wardroper A."/>
            <person name="Felder M."/>
            <person name="Thangavelu M."/>
            <person name="Johnson D."/>
            <person name="Knights A."/>
            <person name="Loulseged H."/>
            <person name="Mungall K.L."/>
            <person name="Oliver K."/>
            <person name="Price C."/>
            <person name="Quail M.A."/>
            <person name="Urushihara H."/>
            <person name="Hernandez J."/>
            <person name="Rabbinowitsch E."/>
            <person name="Steffen D."/>
            <person name="Sanders M."/>
            <person name="Ma J."/>
            <person name="Kohara Y."/>
            <person name="Sharp S."/>
            <person name="Simmonds M.N."/>
            <person name="Spiegler S."/>
            <person name="Tivey A."/>
            <person name="Sugano S."/>
            <person name="White B."/>
            <person name="Walker D."/>
            <person name="Woodward J.R."/>
            <person name="Winckler T."/>
            <person name="Tanaka Y."/>
            <person name="Shaulsky G."/>
            <person name="Schleicher M."/>
            <person name="Weinstock G.M."/>
            <person name="Rosenthal A."/>
            <person name="Cox E.C."/>
            <person name="Chisholm R.L."/>
            <person name="Gibbs R.A."/>
            <person name="Loomis W.F."/>
            <person name="Platzer M."/>
            <person name="Kay R.R."/>
            <person name="Williams J.G."/>
            <person name="Dear P.H."/>
            <person name="Noegel A.A."/>
            <person name="Barrell B.G."/>
            <person name="Kuspa A."/>
        </authorList>
    </citation>
    <scope>NUCLEOTIDE SEQUENCE [LARGE SCALE GENOMIC DNA]</scope>
    <source>
        <strain>AX4</strain>
    </source>
</reference>
<feature type="chain" id="PRO_0000331235" description="Probable microsomal glutathione S-transferase">
    <location>
        <begin position="1"/>
        <end position="149"/>
    </location>
</feature>
<feature type="transmembrane region" description="Helical" evidence="2">
    <location>
        <begin position="7"/>
        <end position="27"/>
    </location>
</feature>
<feature type="transmembrane region" description="Helical" evidence="2">
    <location>
        <begin position="123"/>
        <end position="143"/>
    </location>
</feature>
<organism>
    <name type="scientific">Dictyostelium discoideum</name>
    <name type="common">Social amoeba</name>
    <dbReference type="NCBI Taxonomy" id="44689"/>
    <lineage>
        <taxon>Eukaryota</taxon>
        <taxon>Amoebozoa</taxon>
        <taxon>Evosea</taxon>
        <taxon>Eumycetozoa</taxon>
        <taxon>Dictyostelia</taxon>
        <taxon>Dictyosteliales</taxon>
        <taxon>Dictyosteliaceae</taxon>
        <taxon>Dictyostelium</taxon>
    </lineage>
</organism>
<sequence length="149" mass="16626">MPFDTKSIFPDFIVFPSAISTIAIGLWSVQAYKLGEARKRYNVKAPHVQGDPEFERIAHEYQNTSEALGAIIPATFMFSYYISPKCSLLLGGTWLVSKMLNCCSYCCKKEKENDCAKNVHTCLSHISFFALLGGSAFGIGSSLYNRYKL</sequence>
<name>MGST_DICDI</name>